<proteinExistence type="inferred from homology"/>
<evidence type="ECO:0000255" key="1">
    <source>
        <dbReference type="HAMAP-Rule" id="MF_00636"/>
    </source>
</evidence>
<gene>
    <name type="ordered locus">Sfri_3380</name>
</gene>
<name>Y3380_SHEFN</name>
<accession>Q07XP8</accession>
<dbReference type="EMBL" id="CP000447">
    <property type="protein sequence ID" value="ABI73216.1"/>
    <property type="molecule type" value="Genomic_DNA"/>
</dbReference>
<dbReference type="SMR" id="Q07XP8"/>
<dbReference type="STRING" id="318167.Sfri_3380"/>
<dbReference type="KEGG" id="sfr:Sfri_3380"/>
<dbReference type="eggNOG" id="COG1660">
    <property type="taxonomic scope" value="Bacteria"/>
</dbReference>
<dbReference type="HOGENOM" id="CLU_059558_1_1_6"/>
<dbReference type="OrthoDB" id="9784461at2"/>
<dbReference type="Proteomes" id="UP000000684">
    <property type="component" value="Chromosome"/>
</dbReference>
<dbReference type="GO" id="GO:0005524">
    <property type="term" value="F:ATP binding"/>
    <property type="evidence" value="ECO:0007669"/>
    <property type="project" value="UniProtKB-UniRule"/>
</dbReference>
<dbReference type="GO" id="GO:0005525">
    <property type="term" value="F:GTP binding"/>
    <property type="evidence" value="ECO:0007669"/>
    <property type="project" value="UniProtKB-UniRule"/>
</dbReference>
<dbReference type="HAMAP" id="MF_00636">
    <property type="entry name" value="RapZ_like"/>
    <property type="match status" value="1"/>
</dbReference>
<dbReference type="InterPro" id="IPR027417">
    <property type="entry name" value="P-loop_NTPase"/>
</dbReference>
<dbReference type="InterPro" id="IPR005337">
    <property type="entry name" value="RapZ-like"/>
</dbReference>
<dbReference type="InterPro" id="IPR053930">
    <property type="entry name" value="RapZ-like_N"/>
</dbReference>
<dbReference type="InterPro" id="IPR053931">
    <property type="entry name" value="RapZ_C"/>
</dbReference>
<dbReference type="NCBIfam" id="NF003828">
    <property type="entry name" value="PRK05416.1"/>
    <property type="match status" value="1"/>
</dbReference>
<dbReference type="PANTHER" id="PTHR30448">
    <property type="entry name" value="RNASE ADAPTER PROTEIN RAPZ"/>
    <property type="match status" value="1"/>
</dbReference>
<dbReference type="PANTHER" id="PTHR30448:SF0">
    <property type="entry name" value="RNASE ADAPTER PROTEIN RAPZ"/>
    <property type="match status" value="1"/>
</dbReference>
<dbReference type="Pfam" id="PF22740">
    <property type="entry name" value="PapZ_C"/>
    <property type="match status" value="1"/>
</dbReference>
<dbReference type="Pfam" id="PF03668">
    <property type="entry name" value="RapZ-like_N"/>
    <property type="match status" value="1"/>
</dbReference>
<dbReference type="PIRSF" id="PIRSF005052">
    <property type="entry name" value="P-loopkin"/>
    <property type="match status" value="1"/>
</dbReference>
<dbReference type="SUPFAM" id="SSF52540">
    <property type="entry name" value="P-loop containing nucleoside triphosphate hydrolases"/>
    <property type="match status" value="1"/>
</dbReference>
<reference key="1">
    <citation type="submission" date="2006-08" db="EMBL/GenBank/DDBJ databases">
        <title>Complete sequence of Shewanella frigidimarina NCIMB 400.</title>
        <authorList>
            <consortium name="US DOE Joint Genome Institute"/>
            <person name="Copeland A."/>
            <person name="Lucas S."/>
            <person name="Lapidus A."/>
            <person name="Barry K."/>
            <person name="Detter J.C."/>
            <person name="Glavina del Rio T."/>
            <person name="Hammon N."/>
            <person name="Israni S."/>
            <person name="Dalin E."/>
            <person name="Tice H."/>
            <person name="Pitluck S."/>
            <person name="Fredrickson J.K."/>
            <person name="Kolker E."/>
            <person name="McCuel L.A."/>
            <person name="DiChristina T."/>
            <person name="Nealson K.H."/>
            <person name="Newman D."/>
            <person name="Tiedje J.M."/>
            <person name="Zhou J."/>
            <person name="Romine M.F."/>
            <person name="Culley D.E."/>
            <person name="Serres M."/>
            <person name="Chertkov O."/>
            <person name="Brettin T."/>
            <person name="Bruce D."/>
            <person name="Han C."/>
            <person name="Tapia R."/>
            <person name="Gilna P."/>
            <person name="Schmutz J."/>
            <person name="Larimer F."/>
            <person name="Land M."/>
            <person name="Hauser L."/>
            <person name="Kyrpides N."/>
            <person name="Mikhailova N."/>
            <person name="Richardson P."/>
        </authorList>
    </citation>
    <scope>NUCLEOTIDE SEQUENCE [LARGE SCALE GENOMIC DNA]</scope>
    <source>
        <strain>NCIMB 400</strain>
    </source>
</reference>
<organism>
    <name type="scientific">Shewanella frigidimarina (strain NCIMB 400)</name>
    <dbReference type="NCBI Taxonomy" id="318167"/>
    <lineage>
        <taxon>Bacteria</taxon>
        <taxon>Pseudomonadati</taxon>
        <taxon>Pseudomonadota</taxon>
        <taxon>Gammaproteobacteria</taxon>
        <taxon>Alteromonadales</taxon>
        <taxon>Shewanellaceae</taxon>
        <taxon>Shewanella</taxon>
    </lineage>
</organism>
<comment type="function">
    <text evidence="1">Displays ATPase and GTPase activities.</text>
</comment>
<comment type="similarity">
    <text evidence="1">Belongs to the RapZ-like family.</text>
</comment>
<keyword id="KW-0067">ATP-binding</keyword>
<keyword id="KW-0342">GTP-binding</keyword>
<keyword id="KW-0547">Nucleotide-binding</keyword>
<keyword id="KW-1185">Reference proteome</keyword>
<protein>
    <recommendedName>
        <fullName evidence="1">Nucleotide-binding protein Sfri_3380</fullName>
    </recommendedName>
</protein>
<feature type="chain" id="PRO_1000056855" description="Nucleotide-binding protein Sfri_3380">
    <location>
        <begin position="1"/>
        <end position="287"/>
    </location>
</feature>
<feature type="binding site" evidence="1">
    <location>
        <begin position="8"/>
        <end position="15"/>
    </location>
    <ligand>
        <name>ATP</name>
        <dbReference type="ChEBI" id="CHEBI:30616"/>
    </ligand>
</feature>
<feature type="binding site" evidence="1">
    <location>
        <begin position="56"/>
        <end position="59"/>
    </location>
    <ligand>
        <name>GTP</name>
        <dbReference type="ChEBI" id="CHEBI:37565"/>
    </ligand>
</feature>
<sequence>MKLVIVSGRSGSGKSVALRVLEDLGYYCVDNLPLPLIGTLLAQLKGSNDLVAISVDVRNIAEQGKVLQDQLALLENDTEIISFFLNSNDKVLLKRYSETRRLHPLSKNHISLQEAIKLEGRLLEPIAKIVDHYIDTSALNIYELSDQVRQILLGSVDKELVINFESFGFKHGMPTEADFMFDVRFLPNPHWEIELRPFTGLDEPVQEFLGRQPLVNKFIWQIENLFETWMPHLERNNRSYLTIAIGCTGGQHRSVYIADQLAKRFRQGSKHTVNARHRELNISDTNN</sequence>